<accession>Q7V9A2</accession>
<proteinExistence type="inferred from homology"/>
<feature type="chain" id="PRO_0000162843" description="Thiazole synthase">
    <location>
        <begin position="1"/>
        <end position="274"/>
    </location>
</feature>
<feature type="region of interest" description="Disordered" evidence="2">
    <location>
        <begin position="251"/>
        <end position="274"/>
    </location>
</feature>
<feature type="active site" description="Schiff-base intermediate with DXP" evidence="1">
    <location>
        <position position="111"/>
    </location>
</feature>
<feature type="binding site" evidence="1">
    <location>
        <position position="172"/>
    </location>
    <ligand>
        <name>1-deoxy-D-xylulose 5-phosphate</name>
        <dbReference type="ChEBI" id="CHEBI:57792"/>
    </ligand>
</feature>
<feature type="binding site" evidence="1">
    <location>
        <begin position="198"/>
        <end position="199"/>
    </location>
    <ligand>
        <name>1-deoxy-D-xylulose 5-phosphate</name>
        <dbReference type="ChEBI" id="CHEBI:57792"/>
    </ligand>
</feature>
<feature type="binding site" evidence="1">
    <location>
        <begin position="220"/>
        <end position="221"/>
    </location>
    <ligand>
        <name>1-deoxy-D-xylulose 5-phosphate</name>
        <dbReference type="ChEBI" id="CHEBI:57792"/>
    </ligand>
</feature>
<sequence>MVLTHSSPDLLTIGKRNFHSRLFAGTGKYPSLKVMQESLRSSGCEMVTVAVRRVQTMASGHAGLIEAIDWSKIWMLPNTAGCATAEEAIRVARLGRELAKLAGQEDNKFVKLEVIPDSRYLLPDPFGTLEAAEQLVKEGFEVLPYINADPLLAKRLEEVGCATVMPLGSPIGSGQGLRNAANISLIIENARVPVVVDAGIGVPSEAAQALEMGADAVLVNSAIALAGDPITMAEAMRWAIQAGRQAYRSGRLPERAAASPSSPTTGIIAEAKTK</sequence>
<gene>
    <name evidence="1" type="primary">thiG</name>
    <name type="ordered locus">PMT_0052</name>
</gene>
<organism>
    <name type="scientific">Prochlorococcus marinus (strain MIT 9313)</name>
    <dbReference type="NCBI Taxonomy" id="74547"/>
    <lineage>
        <taxon>Bacteria</taxon>
        <taxon>Bacillati</taxon>
        <taxon>Cyanobacteriota</taxon>
        <taxon>Cyanophyceae</taxon>
        <taxon>Synechococcales</taxon>
        <taxon>Prochlorococcaceae</taxon>
        <taxon>Prochlorococcus</taxon>
    </lineage>
</organism>
<keyword id="KW-0963">Cytoplasm</keyword>
<keyword id="KW-1185">Reference proteome</keyword>
<keyword id="KW-0704">Schiff base</keyword>
<keyword id="KW-0784">Thiamine biosynthesis</keyword>
<keyword id="KW-0808">Transferase</keyword>
<protein>
    <recommendedName>
        <fullName evidence="1">Thiazole synthase</fullName>
        <ecNumber evidence="1">2.8.1.10</ecNumber>
    </recommendedName>
</protein>
<name>THIG_PROMM</name>
<evidence type="ECO:0000255" key="1">
    <source>
        <dbReference type="HAMAP-Rule" id="MF_00443"/>
    </source>
</evidence>
<evidence type="ECO:0000256" key="2">
    <source>
        <dbReference type="SAM" id="MobiDB-lite"/>
    </source>
</evidence>
<evidence type="ECO:0000305" key="3"/>
<reference key="1">
    <citation type="journal article" date="2003" name="Nature">
        <title>Genome divergence in two Prochlorococcus ecotypes reflects oceanic niche differentiation.</title>
        <authorList>
            <person name="Rocap G."/>
            <person name="Larimer F.W."/>
            <person name="Lamerdin J.E."/>
            <person name="Malfatti S."/>
            <person name="Chain P."/>
            <person name="Ahlgren N.A."/>
            <person name="Arellano A."/>
            <person name="Coleman M."/>
            <person name="Hauser L."/>
            <person name="Hess W.R."/>
            <person name="Johnson Z.I."/>
            <person name="Land M.L."/>
            <person name="Lindell D."/>
            <person name="Post A.F."/>
            <person name="Regala W."/>
            <person name="Shah M."/>
            <person name="Shaw S.L."/>
            <person name="Steglich C."/>
            <person name="Sullivan M.B."/>
            <person name="Ting C.S."/>
            <person name="Tolonen A."/>
            <person name="Webb E.A."/>
            <person name="Zinser E.R."/>
            <person name="Chisholm S.W."/>
        </authorList>
    </citation>
    <scope>NUCLEOTIDE SEQUENCE [LARGE SCALE GENOMIC DNA]</scope>
    <source>
        <strain>MIT 9313</strain>
    </source>
</reference>
<dbReference type="EC" id="2.8.1.10" evidence="1"/>
<dbReference type="EMBL" id="BX548175">
    <property type="protein sequence ID" value="CAE20227.1"/>
    <property type="status" value="ALT_INIT"/>
    <property type="molecule type" value="Genomic_DNA"/>
</dbReference>
<dbReference type="RefSeq" id="WP_041384830.1">
    <property type="nucleotide sequence ID" value="NC_005071.1"/>
</dbReference>
<dbReference type="SMR" id="Q7V9A2"/>
<dbReference type="KEGG" id="pmt:PMT_0052"/>
<dbReference type="eggNOG" id="COG2022">
    <property type="taxonomic scope" value="Bacteria"/>
</dbReference>
<dbReference type="HOGENOM" id="CLU_062233_1_0_3"/>
<dbReference type="OrthoDB" id="9805935at2"/>
<dbReference type="UniPathway" id="UPA00060"/>
<dbReference type="Proteomes" id="UP000001423">
    <property type="component" value="Chromosome"/>
</dbReference>
<dbReference type="GO" id="GO:0005737">
    <property type="term" value="C:cytoplasm"/>
    <property type="evidence" value="ECO:0007669"/>
    <property type="project" value="UniProtKB-SubCell"/>
</dbReference>
<dbReference type="GO" id="GO:1990107">
    <property type="term" value="F:thiazole synthase activity"/>
    <property type="evidence" value="ECO:0007669"/>
    <property type="project" value="UniProtKB-EC"/>
</dbReference>
<dbReference type="GO" id="GO:0009229">
    <property type="term" value="P:thiamine diphosphate biosynthetic process"/>
    <property type="evidence" value="ECO:0007669"/>
    <property type="project" value="UniProtKB-UniRule"/>
</dbReference>
<dbReference type="CDD" id="cd04728">
    <property type="entry name" value="ThiG"/>
    <property type="match status" value="1"/>
</dbReference>
<dbReference type="Gene3D" id="3.20.20.70">
    <property type="entry name" value="Aldolase class I"/>
    <property type="match status" value="1"/>
</dbReference>
<dbReference type="HAMAP" id="MF_00443">
    <property type="entry name" value="ThiG"/>
    <property type="match status" value="1"/>
</dbReference>
<dbReference type="InterPro" id="IPR013785">
    <property type="entry name" value="Aldolase_TIM"/>
</dbReference>
<dbReference type="InterPro" id="IPR033983">
    <property type="entry name" value="Thiazole_synthase_ThiG"/>
</dbReference>
<dbReference type="InterPro" id="IPR008867">
    <property type="entry name" value="ThiG"/>
</dbReference>
<dbReference type="PANTHER" id="PTHR34266">
    <property type="entry name" value="THIAZOLE SYNTHASE"/>
    <property type="match status" value="1"/>
</dbReference>
<dbReference type="PANTHER" id="PTHR34266:SF2">
    <property type="entry name" value="THIAZOLE SYNTHASE"/>
    <property type="match status" value="1"/>
</dbReference>
<dbReference type="Pfam" id="PF05690">
    <property type="entry name" value="ThiG"/>
    <property type="match status" value="1"/>
</dbReference>
<dbReference type="SUPFAM" id="SSF110399">
    <property type="entry name" value="ThiG-like"/>
    <property type="match status" value="1"/>
</dbReference>
<comment type="function">
    <text evidence="1">Catalyzes the rearrangement of 1-deoxy-D-xylulose 5-phosphate (DXP) to produce the thiazole phosphate moiety of thiamine. Sulfur is provided by the thiocarboxylate moiety of the carrier protein ThiS. In vitro, sulfur can be provided by H(2)S.</text>
</comment>
<comment type="catalytic activity">
    <reaction evidence="1">
        <text>[ThiS sulfur-carrier protein]-C-terminal-Gly-aminoethanethioate + 2-iminoacetate + 1-deoxy-D-xylulose 5-phosphate = [ThiS sulfur-carrier protein]-C-terminal Gly-Gly + 2-[(2R,5Z)-2-carboxy-4-methylthiazol-5(2H)-ylidene]ethyl phosphate + 2 H2O + H(+)</text>
        <dbReference type="Rhea" id="RHEA:26297"/>
        <dbReference type="Rhea" id="RHEA-COMP:12909"/>
        <dbReference type="Rhea" id="RHEA-COMP:19908"/>
        <dbReference type="ChEBI" id="CHEBI:15377"/>
        <dbReference type="ChEBI" id="CHEBI:15378"/>
        <dbReference type="ChEBI" id="CHEBI:57792"/>
        <dbReference type="ChEBI" id="CHEBI:62899"/>
        <dbReference type="ChEBI" id="CHEBI:77846"/>
        <dbReference type="ChEBI" id="CHEBI:90778"/>
        <dbReference type="ChEBI" id="CHEBI:232372"/>
        <dbReference type="EC" id="2.8.1.10"/>
    </reaction>
</comment>
<comment type="pathway">
    <text evidence="1">Cofactor biosynthesis; thiamine diphosphate biosynthesis.</text>
</comment>
<comment type="subunit">
    <text evidence="1">Homotetramer. Forms heterodimers with either ThiH or ThiS.</text>
</comment>
<comment type="subcellular location">
    <subcellularLocation>
        <location evidence="1">Cytoplasm</location>
    </subcellularLocation>
</comment>
<comment type="similarity">
    <text evidence="1">Belongs to the ThiG family.</text>
</comment>
<comment type="sequence caution" evidence="3">
    <conflict type="erroneous initiation">
        <sequence resource="EMBL-CDS" id="CAE20227"/>
    </conflict>
</comment>